<name>VEM1_CAEEL</name>
<reference evidence="5" key="1">
    <citation type="journal article" date="1998" name="Science">
        <title>Genome sequence of the nematode C. elegans: a platform for investigating biology.</title>
        <authorList>
            <consortium name="The C. elegans sequencing consortium"/>
        </authorList>
    </citation>
    <scope>NUCLEOTIDE SEQUENCE [LARGE SCALE GENOMIC DNA]</scope>
    <source>
        <strain evidence="5">Bristol N2</strain>
    </source>
</reference>
<reference evidence="4" key="2">
    <citation type="journal article" date="2004" name="J. Neurosci.">
        <title>Caenorhabditis elegans VEM-1, a novel membrane protein, regulates the guidance of ventral nerve cord-associated axons.</title>
        <authorList>
            <person name="Runko E."/>
            <person name="Kaprielian Z."/>
        </authorList>
    </citation>
    <scope>FUNCTION</scope>
    <scope>INTERACTION WITH UNC-40</scope>
    <scope>TISSUE SPECIFICITY</scope>
    <scope>DEVELOPMENTAL STAGE</scope>
    <scope>DISRUPTION PHENOTYPE</scope>
</reference>
<gene>
    <name evidence="6" type="primary">vem-1</name>
    <name evidence="6" type="ORF">K07E3.8</name>
</gene>
<comment type="function">
    <text evidence="3">Transmembrane protein required for the axon guidance of a subset of ventral nerve cord-associated interneurons and motor neurons. May function with the netrin receptor unc-40 in axon guidance.</text>
</comment>
<comment type="subunit">
    <text evidence="3">Interacts with unc-40 (via cytoplasmic domain).</text>
</comment>
<comment type="subcellular location">
    <subcellularLocation>
        <location evidence="1">Membrane</location>
        <topology evidence="1">Single-pass membrane protein</topology>
    </subcellularLocation>
    <subcellularLocation>
        <location evidence="3">Cell projection</location>
        <location evidence="3">Axon</location>
    </subcellularLocation>
</comment>
<comment type="tissue specificity">
    <text evidence="3">Expressed in the AVG pioneer midline neuron and in several nerve ring neurons that extend projecting axons into the right ventral nerve cord.</text>
</comment>
<comment type="developmental stage">
    <text evidence="3">During the 1.5 fold embryo stage, detected in the AVG pioneer neuron and in the developing ventral nerve cord. At larval stage L1, detected in the AVG, CEPDL/R, RMDVL/R, RIVL/R, AVAL/R, RMDL/R, and RMDDL/R neurons. At larval stage L4, expression continues in the AVG neuron and a subset of nerve ring neurons that extend axons into the right ventral nerve cord.</text>
</comment>
<comment type="domain">
    <text evidence="4">The cytochrome b5 heme-binding domain lacks the conserved iron-binding His residues at positions 84 and 106.</text>
</comment>
<comment type="disruption phenotype">
    <text evidence="3">Axon guidance defects of nerve ring-associated interneurons that extend their axons posteriorly into the right ventral nerve cord as well as defects in the axon guidance of D-type motor neurons that project their axons longitudinally along the ventral nerve cord. No axon guidance defects are observed for the AVG midline neuron.</text>
</comment>
<comment type="similarity">
    <text evidence="4">Belongs to the cytochrome b5 family. MAPR subfamily.</text>
</comment>
<protein>
    <recommendedName>
        <fullName evidence="4">Protein vem-1</fullName>
    </recommendedName>
</protein>
<sequence length="183" mass="20503">MDLSSWFEFTMYDAVFLVVVLGFFFYWLTRSEQPLPAPPKELAPLPMSDMTVEELRKYDGVKNEHILFGLNGTIYDVTRGKGFYGPGKAYGTLAGHDATRALGTMDQNAVSSEWDDHTGISADEQETANEWETQFKFKYLTVGRLVKNSSEKADYGNRKSFVRGAESLDSIINGGDEGTKKDN</sequence>
<dbReference type="EMBL" id="BX284606">
    <property type="protein sequence ID" value="CCD62520.1"/>
    <property type="molecule type" value="Genomic_DNA"/>
</dbReference>
<dbReference type="RefSeq" id="NP_001024770.1">
    <property type="nucleotide sequence ID" value="NM_001029599.11"/>
</dbReference>
<dbReference type="SMR" id="Q7YZW5"/>
<dbReference type="FunCoup" id="Q7YZW5">
    <property type="interactions" value="2826"/>
</dbReference>
<dbReference type="STRING" id="6239.K07E3.8.2"/>
<dbReference type="PaxDb" id="6239-K07E3.8a"/>
<dbReference type="PeptideAtlas" id="Q7YZW5"/>
<dbReference type="EnsemblMetazoa" id="K07E3.8.1">
    <property type="protein sequence ID" value="K07E3.8.1"/>
    <property type="gene ID" value="WBGene00006890"/>
</dbReference>
<dbReference type="GeneID" id="181066"/>
<dbReference type="KEGG" id="cel:CELE_K07E3.8"/>
<dbReference type="UCSC" id="K07E3.8b.2">
    <property type="organism name" value="c. elegans"/>
</dbReference>
<dbReference type="AGR" id="WB:WBGene00006890"/>
<dbReference type="CTD" id="181066"/>
<dbReference type="WormBase" id="K07E3.8">
    <property type="protein sequence ID" value="CE34578"/>
    <property type="gene ID" value="WBGene00006890"/>
    <property type="gene designation" value="vem-1"/>
</dbReference>
<dbReference type="eggNOG" id="KOG1110">
    <property type="taxonomic scope" value="Eukaryota"/>
</dbReference>
<dbReference type="GeneTree" id="ENSGT00940000169479"/>
<dbReference type="HOGENOM" id="CLU_042860_1_1_1"/>
<dbReference type="InParanoid" id="Q7YZW5"/>
<dbReference type="OrthoDB" id="547796at2759"/>
<dbReference type="Reactome" id="R-CEL-6798695">
    <property type="pathway name" value="Neutrophil degranulation"/>
</dbReference>
<dbReference type="Reactome" id="R-CEL-9013405">
    <property type="pathway name" value="RHOD GTPase cycle"/>
</dbReference>
<dbReference type="Reactome" id="R-CEL-9707616">
    <property type="pathway name" value="Heme signaling"/>
</dbReference>
<dbReference type="PRO" id="PR:Q7YZW5"/>
<dbReference type="Proteomes" id="UP000001940">
    <property type="component" value="Chromosome X"/>
</dbReference>
<dbReference type="Bgee" id="WBGene00006890">
    <property type="expression patterns" value="Expressed in larva and 4 other cell types or tissues"/>
</dbReference>
<dbReference type="GO" id="GO:0030424">
    <property type="term" value="C:axon"/>
    <property type="evidence" value="ECO:0000314"/>
    <property type="project" value="WormBase"/>
</dbReference>
<dbReference type="GO" id="GO:0012505">
    <property type="term" value="C:endomembrane system"/>
    <property type="evidence" value="ECO:0000318"/>
    <property type="project" value="GO_Central"/>
</dbReference>
<dbReference type="GO" id="GO:0016020">
    <property type="term" value="C:membrane"/>
    <property type="evidence" value="ECO:0000318"/>
    <property type="project" value="GO_Central"/>
</dbReference>
<dbReference type="GO" id="GO:0045087">
    <property type="term" value="P:innate immune response"/>
    <property type="evidence" value="ECO:0007007"/>
    <property type="project" value="WormBase"/>
</dbReference>
<dbReference type="GO" id="GO:0007399">
    <property type="term" value="P:nervous system development"/>
    <property type="evidence" value="ECO:0007669"/>
    <property type="project" value="UniProtKB-KW"/>
</dbReference>
<dbReference type="FunFam" id="3.10.120.10:FF:000026">
    <property type="entry name" value="Protein vem-1"/>
    <property type="match status" value="1"/>
</dbReference>
<dbReference type="Gene3D" id="3.10.120.10">
    <property type="entry name" value="Cytochrome b5-like heme/steroid binding domain"/>
    <property type="match status" value="1"/>
</dbReference>
<dbReference type="InterPro" id="IPR001199">
    <property type="entry name" value="Cyt_B5-like_heme/steroid-bd"/>
</dbReference>
<dbReference type="InterPro" id="IPR036400">
    <property type="entry name" value="Cyt_B5-like_heme/steroid_sf"/>
</dbReference>
<dbReference type="InterPro" id="IPR050577">
    <property type="entry name" value="MAPR/NEUFC/NENF-like"/>
</dbReference>
<dbReference type="PANTHER" id="PTHR10281:SF76">
    <property type="entry name" value="CALCUTTA CUP-RELATED"/>
    <property type="match status" value="1"/>
</dbReference>
<dbReference type="PANTHER" id="PTHR10281">
    <property type="entry name" value="MEMBRANE-ASSOCIATED PROGESTERONE RECEPTOR COMPONENT-RELATED"/>
    <property type="match status" value="1"/>
</dbReference>
<dbReference type="Pfam" id="PF00173">
    <property type="entry name" value="Cyt-b5"/>
    <property type="match status" value="1"/>
</dbReference>
<dbReference type="SMART" id="SM01117">
    <property type="entry name" value="Cyt-b5"/>
    <property type="match status" value="1"/>
</dbReference>
<dbReference type="SUPFAM" id="SSF55856">
    <property type="entry name" value="Cytochrome b5-like heme/steroid binding domain"/>
    <property type="match status" value="1"/>
</dbReference>
<organism evidence="5">
    <name type="scientific">Caenorhabditis elegans</name>
    <dbReference type="NCBI Taxonomy" id="6239"/>
    <lineage>
        <taxon>Eukaryota</taxon>
        <taxon>Metazoa</taxon>
        <taxon>Ecdysozoa</taxon>
        <taxon>Nematoda</taxon>
        <taxon>Chromadorea</taxon>
        <taxon>Rhabditida</taxon>
        <taxon>Rhabditina</taxon>
        <taxon>Rhabditomorpha</taxon>
        <taxon>Rhabditoidea</taxon>
        <taxon>Rhabditidae</taxon>
        <taxon>Peloderinae</taxon>
        <taxon>Caenorhabditis</taxon>
    </lineage>
</organism>
<feature type="chain" id="PRO_0000439234" description="Protein vem-1">
    <location>
        <begin position="1"/>
        <end position="183"/>
    </location>
</feature>
<feature type="transmembrane region" description="Helical" evidence="1">
    <location>
        <begin position="9"/>
        <end position="29"/>
    </location>
</feature>
<feature type="domain" description="Cytochrome b5 heme-binding" evidence="2">
    <location>
        <begin position="47"/>
        <end position="146"/>
    </location>
</feature>
<evidence type="ECO:0000255" key="1"/>
<evidence type="ECO:0000255" key="2">
    <source>
        <dbReference type="PROSITE-ProRule" id="PRU00279"/>
    </source>
</evidence>
<evidence type="ECO:0000269" key="3">
    <source>
    </source>
</evidence>
<evidence type="ECO:0000305" key="4"/>
<evidence type="ECO:0000312" key="5">
    <source>
        <dbReference type="Proteomes" id="UP000001940"/>
    </source>
</evidence>
<evidence type="ECO:0000312" key="6">
    <source>
        <dbReference type="WormBase" id="K07E3.8"/>
    </source>
</evidence>
<proteinExistence type="evidence at protein level"/>
<accession>Q7YZW5</accession>
<keyword id="KW-0966">Cell projection</keyword>
<keyword id="KW-0472">Membrane</keyword>
<keyword id="KW-0524">Neurogenesis</keyword>
<keyword id="KW-1185">Reference proteome</keyword>
<keyword id="KW-0812">Transmembrane</keyword>
<keyword id="KW-1133">Transmembrane helix</keyword>